<dbReference type="EMBL" id="AY702316">
    <property type="protein sequence ID" value="AAV70128.1"/>
    <property type="molecule type" value="mRNA"/>
</dbReference>
<dbReference type="RefSeq" id="NP_001008512.1">
    <property type="nucleotide sequence ID" value="NM_001008512.1"/>
</dbReference>
<dbReference type="SMR" id="Q5QD25"/>
<dbReference type="FunCoup" id="Q5QD25">
    <property type="interactions" value="32"/>
</dbReference>
<dbReference type="STRING" id="10116.ENSRNOP00000030671"/>
<dbReference type="GlyCosmos" id="Q5QD25">
    <property type="glycosylation" value="2 sites, No reported glycans"/>
</dbReference>
<dbReference type="GlyGen" id="Q5QD25">
    <property type="glycosylation" value="2 sites"/>
</dbReference>
<dbReference type="PhosphoSitePlus" id="Q5QD25"/>
<dbReference type="PaxDb" id="10116-ENSRNOP00000030671"/>
<dbReference type="Ensembl" id="ENSRNOT00000035424.5">
    <property type="protein sequence ID" value="ENSRNOP00000030671.4"/>
    <property type="gene ID" value="ENSRNOG00000025951.5"/>
</dbReference>
<dbReference type="GeneID" id="294121"/>
<dbReference type="KEGG" id="rno:294121"/>
<dbReference type="AGR" id="RGD:1311240"/>
<dbReference type="CTD" id="9287"/>
<dbReference type="RGD" id="1311240">
    <property type="gene designation" value="Taar2"/>
</dbReference>
<dbReference type="eggNOG" id="KOG3656">
    <property type="taxonomic scope" value="Eukaryota"/>
</dbReference>
<dbReference type="GeneTree" id="ENSGT00940000161475"/>
<dbReference type="HOGENOM" id="CLU_009579_11_0_1"/>
<dbReference type="InParanoid" id="Q5QD25"/>
<dbReference type="OMA" id="NCWYFGM"/>
<dbReference type="OrthoDB" id="10042731at2759"/>
<dbReference type="PhylomeDB" id="Q5QD25"/>
<dbReference type="TreeFam" id="TF343107"/>
<dbReference type="Reactome" id="R-RNO-375280">
    <property type="pathway name" value="Amine ligand-binding receptors"/>
</dbReference>
<dbReference type="PRO" id="PR:Q5QD25"/>
<dbReference type="Proteomes" id="UP000002494">
    <property type="component" value="Chromosome 1"/>
</dbReference>
<dbReference type="GO" id="GO:0005886">
    <property type="term" value="C:plasma membrane"/>
    <property type="evidence" value="ECO:0000318"/>
    <property type="project" value="GO_Central"/>
</dbReference>
<dbReference type="GO" id="GO:0001594">
    <property type="term" value="F:trace-amine receptor activity"/>
    <property type="evidence" value="ECO:0000318"/>
    <property type="project" value="GO_Central"/>
</dbReference>
<dbReference type="GO" id="GO:0007186">
    <property type="term" value="P:G protein-coupled receptor signaling pathway"/>
    <property type="evidence" value="ECO:0000318"/>
    <property type="project" value="GO_Central"/>
</dbReference>
<dbReference type="CDD" id="cd15312">
    <property type="entry name" value="7tmA_TAAR2_3_4"/>
    <property type="match status" value="1"/>
</dbReference>
<dbReference type="FunFam" id="1.20.1070.10:FF:000030">
    <property type="entry name" value="trace amine-associated receptor 1"/>
    <property type="match status" value="1"/>
</dbReference>
<dbReference type="Gene3D" id="1.20.1070.10">
    <property type="entry name" value="Rhodopsin 7-helix transmembrane proteins"/>
    <property type="match status" value="1"/>
</dbReference>
<dbReference type="InterPro" id="IPR000276">
    <property type="entry name" value="GPCR_Rhodpsn"/>
</dbReference>
<dbReference type="InterPro" id="IPR017452">
    <property type="entry name" value="GPCR_Rhodpsn_7TM"/>
</dbReference>
<dbReference type="InterPro" id="IPR050569">
    <property type="entry name" value="TAAR"/>
</dbReference>
<dbReference type="InterPro" id="IPR009132">
    <property type="entry name" value="TAAR_fam"/>
</dbReference>
<dbReference type="PANTHER" id="PTHR24249">
    <property type="entry name" value="HISTAMINE RECEPTOR-RELATED G-PROTEIN COUPLED RECEPTOR"/>
    <property type="match status" value="1"/>
</dbReference>
<dbReference type="PANTHER" id="PTHR24249:SF413">
    <property type="entry name" value="TRACE AMINE-ASSOCIATED RECEPTOR 2"/>
    <property type="match status" value="1"/>
</dbReference>
<dbReference type="Pfam" id="PF00001">
    <property type="entry name" value="7tm_1"/>
    <property type="match status" value="1"/>
</dbReference>
<dbReference type="PRINTS" id="PR00237">
    <property type="entry name" value="GPCRRHODOPSN"/>
</dbReference>
<dbReference type="PRINTS" id="PR01830">
    <property type="entry name" value="TRACEAMINER"/>
</dbReference>
<dbReference type="SMART" id="SM01381">
    <property type="entry name" value="7TM_GPCR_Srsx"/>
    <property type="match status" value="1"/>
</dbReference>
<dbReference type="SUPFAM" id="SSF81321">
    <property type="entry name" value="Family A G protein-coupled receptor-like"/>
    <property type="match status" value="1"/>
</dbReference>
<dbReference type="PROSITE" id="PS00237">
    <property type="entry name" value="G_PROTEIN_RECEP_F1_1"/>
    <property type="match status" value="1"/>
</dbReference>
<dbReference type="PROSITE" id="PS50262">
    <property type="entry name" value="G_PROTEIN_RECEP_F1_2"/>
    <property type="match status" value="1"/>
</dbReference>
<reference key="1">
    <citation type="journal article" date="2005" name="Genomics">
        <title>Trace amine-associated receptors form structurally and functionally distinct subfamilies of novel G protein-coupled receptors.</title>
        <authorList>
            <person name="Lindemann L."/>
            <person name="Ebeling M."/>
            <person name="Kratochwil N.A."/>
            <person name="Bunzow J.R."/>
            <person name="Grandy D.K."/>
            <person name="Hoener M.C."/>
        </authorList>
    </citation>
    <scope>NUCLEOTIDE SEQUENCE [MRNA]</scope>
    <source>
        <strain>WIST/Crl</strain>
    </source>
</reference>
<keyword id="KW-1003">Cell membrane</keyword>
<keyword id="KW-1015">Disulfide bond</keyword>
<keyword id="KW-0297">G-protein coupled receptor</keyword>
<keyword id="KW-0325">Glycoprotein</keyword>
<keyword id="KW-0472">Membrane</keyword>
<keyword id="KW-0675">Receptor</keyword>
<keyword id="KW-1185">Reference proteome</keyword>
<keyword id="KW-0807">Transducer</keyword>
<keyword id="KW-0812">Transmembrane</keyword>
<keyword id="KW-1133">Transmembrane helix</keyword>
<name>TAAR2_RAT</name>
<organism>
    <name type="scientific">Rattus norvegicus</name>
    <name type="common">Rat</name>
    <dbReference type="NCBI Taxonomy" id="10116"/>
    <lineage>
        <taxon>Eukaryota</taxon>
        <taxon>Metazoa</taxon>
        <taxon>Chordata</taxon>
        <taxon>Craniata</taxon>
        <taxon>Vertebrata</taxon>
        <taxon>Euteleostomi</taxon>
        <taxon>Mammalia</taxon>
        <taxon>Eutheria</taxon>
        <taxon>Euarchontoglires</taxon>
        <taxon>Glires</taxon>
        <taxon>Rodentia</taxon>
        <taxon>Myomorpha</taxon>
        <taxon>Muroidea</taxon>
        <taxon>Muridae</taxon>
        <taxon>Murinae</taxon>
        <taxon>Rattus</taxon>
    </lineage>
</organism>
<proteinExistence type="evidence at transcript level"/>
<evidence type="ECO:0000250" key="1">
    <source>
        <dbReference type="UniProtKB" id="Q5QD04"/>
    </source>
</evidence>
<evidence type="ECO:0000250" key="2">
    <source>
        <dbReference type="UniProtKB" id="Q5QD17"/>
    </source>
</evidence>
<evidence type="ECO:0000255" key="3"/>
<evidence type="ECO:0000255" key="4">
    <source>
        <dbReference type="PROSITE-ProRule" id="PRU00521"/>
    </source>
</evidence>
<gene>
    <name type="primary">Taar2</name>
    <name type="synonym">Gpr58</name>
</gene>
<feature type="chain" id="PRO_0000070148" description="Trace amine-associated receptor 2">
    <location>
        <begin position="1"/>
        <end position="339"/>
    </location>
</feature>
<feature type="topological domain" description="Extracellular" evidence="3">
    <location>
        <begin position="1"/>
        <end position="36"/>
    </location>
</feature>
<feature type="transmembrane region" description="Helical; Name=1" evidence="3">
    <location>
        <begin position="37"/>
        <end position="57"/>
    </location>
</feature>
<feature type="topological domain" description="Cytoplasmic" evidence="3">
    <location>
        <begin position="58"/>
        <end position="67"/>
    </location>
</feature>
<feature type="transmembrane region" description="Helical; Name=2" evidence="3">
    <location>
        <begin position="68"/>
        <end position="88"/>
    </location>
</feature>
<feature type="topological domain" description="Extracellular" evidence="3">
    <location>
        <begin position="89"/>
        <end position="106"/>
    </location>
</feature>
<feature type="transmembrane region" description="Helical; Name=3" evidence="3">
    <location>
        <begin position="107"/>
        <end position="127"/>
    </location>
</feature>
<feature type="topological domain" description="Cytoplasmic" evidence="3">
    <location>
        <begin position="128"/>
        <end position="150"/>
    </location>
</feature>
<feature type="transmembrane region" description="Helical; Name=4" evidence="3">
    <location>
        <begin position="151"/>
        <end position="171"/>
    </location>
</feature>
<feature type="topological domain" description="Extracellular" evidence="3">
    <location>
        <begin position="172"/>
        <end position="195"/>
    </location>
</feature>
<feature type="transmembrane region" description="Helical; Name=5" evidence="3">
    <location>
        <begin position="196"/>
        <end position="216"/>
    </location>
</feature>
<feature type="topological domain" description="Cytoplasmic" evidence="3">
    <location>
        <begin position="217"/>
        <end position="251"/>
    </location>
</feature>
<feature type="transmembrane region" description="Helical; Name=6" evidence="3">
    <location>
        <begin position="252"/>
        <end position="272"/>
    </location>
</feature>
<feature type="topological domain" description="Extracellular" evidence="3">
    <location>
        <begin position="273"/>
        <end position="287"/>
    </location>
</feature>
<feature type="transmembrane region" description="Helical; Name=7" evidence="3">
    <location>
        <begin position="288"/>
        <end position="310"/>
    </location>
</feature>
<feature type="topological domain" description="Cytoplasmic" evidence="3">
    <location>
        <begin position="311"/>
        <end position="339"/>
    </location>
</feature>
<feature type="glycosylation site" description="N-linked (GlcNAc...) asparagine" evidence="3">
    <location>
        <position position="18"/>
    </location>
</feature>
<feature type="glycosylation site" description="N-linked (GlcNAc...) asparagine" evidence="3">
    <location>
        <position position="277"/>
    </location>
</feature>
<feature type="disulfide bond" evidence="1">
    <location>
        <begin position="21"/>
        <end position="185"/>
    </location>
</feature>
<feature type="disulfide bond" evidence="4">
    <location>
        <begin position="104"/>
        <end position="189"/>
    </location>
</feature>
<comment type="function">
    <text evidence="1 2">Orphan olfactory receptor specific for trace amines. Trace amine compounds are enriched in animal body fluids and act on trace amine-associated receptors (TAARs) to elicit both intraspecific and interspecific innate behaviors. Ligand-binding causes a conformation change that triggers signaling via the G(s)-class of G-proteins which activate adenylate cyclase (By similarity). May also be required to provide olfactory input into limbic brain areas to regulate emotional behaviors likely via modulation of the dopamine system (By similarity).</text>
</comment>
<comment type="subcellular location">
    <subcellularLocation>
        <location evidence="1">Cell membrane</location>
        <topology evidence="3">Multi-pass membrane protein</topology>
    </subcellularLocation>
</comment>
<comment type="domain">
    <text evidence="1">In addition to the well known disulfide bond common to G-protein coupled receptor 1 family, trace amine-associated receptors (TAARs) contain an unique disulfide bond (Cys-21-Cys-185) connecting the N-terminus to the extracellular Loop 2 (ECL2), which is required for agonist-induced receptor activation.</text>
</comment>
<comment type="similarity">
    <text evidence="4">Belongs to the G-protein coupled receptor 1 family.</text>
</comment>
<protein>
    <recommendedName>
        <fullName>Trace amine-associated receptor 2</fullName>
        <shortName>TaR-2</shortName>
        <shortName>Trace amine receptor 2</shortName>
    </recommendedName>
    <alternativeName>
        <fullName>G-protein coupled receptor 58</fullName>
    </alternativeName>
</protein>
<accession>Q5QD25</accession>
<sequence length="339" mass="38557">MTSFEAQQETFDCSEYGNGSCPENERSLGVRAAMYSLMAGAIFITIFGNLVMIISISYFKQLHTPTNLLILSMAVTDFLLGFTIMPYSMVRSVENCWYFGLTFCKIHYSFDLMLSITSIFHLCSVAIDRFYAICHPLHYCTKMTIPVVKRLLLVCWSVPGAFAFGVVFSEAYADGIEGYDILVACSSSCPVMFNKLWGTTLFVAGFFTPSSMMVGIYGKIFAVSKKHARVIDNLPENQNNQMRKDKKAAKTLGIVMGVFLLCWFPCFFTILLDPFLNFSTPAILFDALTWFGYFNSTCNPLIYGFFYPWFRRALRYILLGKIFSSHFHNTNLFTQKETE</sequence>